<sequence>MSRVLVPCHVKSTVALQVGDMRTSQGRPGVLVVDVTFPNIAPFELQEIMFKNYYTAFLSIRVRQQSSMHTAAKWVTCLRDYCLMPDPHSEEGAQDYVSLFKHQMLCDMNRVLELRLILRQPSPLWLSFTVEELQIYQQGPKSPSLAFPKWLSHPVSNEQPAPRLEGLPDPSRVSSEVQQMWALTEMIRASHTSTRIGRFDVDGCYDLNLLSYT</sequence>
<accession>Q9CQM0</accession>
<feature type="chain" id="PRO_0000096815" description="Nicolin-1">
    <location>
        <begin position="1"/>
        <end position="213"/>
    </location>
</feature>
<evidence type="ECO:0000250" key="1"/>
<evidence type="ECO:0000269" key="2">
    <source>
    </source>
</evidence>
<reference key="1">
    <citation type="journal article" date="2002" name="Eur. J. Biochem.">
        <title>Cloning and characterization of the mammalian-specific nicolin 1 gene (NICN1) encoding a nuclear 24 kDa protein.</title>
        <authorList>
            <person name="Backofen B."/>
            <person name="Jacob R."/>
            <person name="Serth K."/>
            <person name="Gossler A."/>
            <person name="Naim H.Y."/>
            <person name="Leeb T."/>
        </authorList>
    </citation>
    <scope>NUCLEOTIDE SEQUENCE [MRNA]</scope>
    <scope>DEVELOPMENTAL STAGE</scope>
    <scope>TISSUE SPECIFICITY</scope>
    <source>
        <strain>129S6/SvEvTac</strain>
    </source>
</reference>
<reference key="2">
    <citation type="journal article" date="2005" name="Science">
        <title>The transcriptional landscape of the mammalian genome.</title>
        <authorList>
            <person name="Carninci P."/>
            <person name="Kasukawa T."/>
            <person name="Katayama S."/>
            <person name="Gough J."/>
            <person name="Frith M.C."/>
            <person name="Maeda N."/>
            <person name="Oyama R."/>
            <person name="Ravasi T."/>
            <person name="Lenhard B."/>
            <person name="Wells C."/>
            <person name="Kodzius R."/>
            <person name="Shimokawa K."/>
            <person name="Bajic V.B."/>
            <person name="Brenner S.E."/>
            <person name="Batalov S."/>
            <person name="Forrest A.R."/>
            <person name="Zavolan M."/>
            <person name="Davis M.J."/>
            <person name="Wilming L.G."/>
            <person name="Aidinis V."/>
            <person name="Allen J.E."/>
            <person name="Ambesi-Impiombato A."/>
            <person name="Apweiler R."/>
            <person name="Aturaliya R.N."/>
            <person name="Bailey T.L."/>
            <person name="Bansal M."/>
            <person name="Baxter L."/>
            <person name="Beisel K.W."/>
            <person name="Bersano T."/>
            <person name="Bono H."/>
            <person name="Chalk A.M."/>
            <person name="Chiu K.P."/>
            <person name="Choudhary V."/>
            <person name="Christoffels A."/>
            <person name="Clutterbuck D.R."/>
            <person name="Crowe M.L."/>
            <person name="Dalla E."/>
            <person name="Dalrymple B.P."/>
            <person name="de Bono B."/>
            <person name="Della Gatta G."/>
            <person name="di Bernardo D."/>
            <person name="Down T."/>
            <person name="Engstrom P."/>
            <person name="Fagiolini M."/>
            <person name="Faulkner G."/>
            <person name="Fletcher C.F."/>
            <person name="Fukushima T."/>
            <person name="Furuno M."/>
            <person name="Futaki S."/>
            <person name="Gariboldi M."/>
            <person name="Georgii-Hemming P."/>
            <person name="Gingeras T.R."/>
            <person name="Gojobori T."/>
            <person name="Green R.E."/>
            <person name="Gustincich S."/>
            <person name="Harbers M."/>
            <person name="Hayashi Y."/>
            <person name="Hensch T.K."/>
            <person name="Hirokawa N."/>
            <person name="Hill D."/>
            <person name="Huminiecki L."/>
            <person name="Iacono M."/>
            <person name="Ikeo K."/>
            <person name="Iwama A."/>
            <person name="Ishikawa T."/>
            <person name="Jakt M."/>
            <person name="Kanapin A."/>
            <person name="Katoh M."/>
            <person name="Kawasawa Y."/>
            <person name="Kelso J."/>
            <person name="Kitamura H."/>
            <person name="Kitano H."/>
            <person name="Kollias G."/>
            <person name="Krishnan S.P."/>
            <person name="Kruger A."/>
            <person name="Kummerfeld S.K."/>
            <person name="Kurochkin I.V."/>
            <person name="Lareau L.F."/>
            <person name="Lazarevic D."/>
            <person name="Lipovich L."/>
            <person name="Liu J."/>
            <person name="Liuni S."/>
            <person name="McWilliam S."/>
            <person name="Madan Babu M."/>
            <person name="Madera M."/>
            <person name="Marchionni L."/>
            <person name="Matsuda H."/>
            <person name="Matsuzawa S."/>
            <person name="Miki H."/>
            <person name="Mignone F."/>
            <person name="Miyake S."/>
            <person name="Morris K."/>
            <person name="Mottagui-Tabar S."/>
            <person name="Mulder N."/>
            <person name="Nakano N."/>
            <person name="Nakauchi H."/>
            <person name="Ng P."/>
            <person name="Nilsson R."/>
            <person name="Nishiguchi S."/>
            <person name="Nishikawa S."/>
            <person name="Nori F."/>
            <person name="Ohara O."/>
            <person name="Okazaki Y."/>
            <person name="Orlando V."/>
            <person name="Pang K.C."/>
            <person name="Pavan W.J."/>
            <person name="Pavesi G."/>
            <person name="Pesole G."/>
            <person name="Petrovsky N."/>
            <person name="Piazza S."/>
            <person name="Reed J."/>
            <person name="Reid J.F."/>
            <person name="Ring B.Z."/>
            <person name="Ringwald M."/>
            <person name="Rost B."/>
            <person name="Ruan Y."/>
            <person name="Salzberg S.L."/>
            <person name="Sandelin A."/>
            <person name="Schneider C."/>
            <person name="Schoenbach C."/>
            <person name="Sekiguchi K."/>
            <person name="Semple C.A."/>
            <person name="Seno S."/>
            <person name="Sessa L."/>
            <person name="Sheng Y."/>
            <person name="Shibata Y."/>
            <person name="Shimada H."/>
            <person name="Shimada K."/>
            <person name="Silva D."/>
            <person name="Sinclair B."/>
            <person name="Sperling S."/>
            <person name="Stupka E."/>
            <person name="Sugiura K."/>
            <person name="Sultana R."/>
            <person name="Takenaka Y."/>
            <person name="Taki K."/>
            <person name="Tammoja K."/>
            <person name="Tan S.L."/>
            <person name="Tang S."/>
            <person name="Taylor M.S."/>
            <person name="Tegner J."/>
            <person name="Teichmann S.A."/>
            <person name="Ueda H.R."/>
            <person name="van Nimwegen E."/>
            <person name="Verardo R."/>
            <person name="Wei C.L."/>
            <person name="Yagi K."/>
            <person name="Yamanishi H."/>
            <person name="Zabarovsky E."/>
            <person name="Zhu S."/>
            <person name="Zimmer A."/>
            <person name="Hide W."/>
            <person name="Bult C."/>
            <person name="Grimmond S.M."/>
            <person name="Teasdale R.D."/>
            <person name="Liu E.T."/>
            <person name="Brusic V."/>
            <person name="Quackenbush J."/>
            <person name="Wahlestedt C."/>
            <person name="Mattick J.S."/>
            <person name="Hume D.A."/>
            <person name="Kai C."/>
            <person name="Sasaki D."/>
            <person name="Tomaru Y."/>
            <person name="Fukuda S."/>
            <person name="Kanamori-Katayama M."/>
            <person name="Suzuki M."/>
            <person name="Aoki J."/>
            <person name="Arakawa T."/>
            <person name="Iida J."/>
            <person name="Imamura K."/>
            <person name="Itoh M."/>
            <person name="Kato T."/>
            <person name="Kawaji H."/>
            <person name="Kawagashira N."/>
            <person name="Kawashima T."/>
            <person name="Kojima M."/>
            <person name="Kondo S."/>
            <person name="Konno H."/>
            <person name="Nakano K."/>
            <person name="Ninomiya N."/>
            <person name="Nishio T."/>
            <person name="Okada M."/>
            <person name="Plessy C."/>
            <person name="Shibata K."/>
            <person name="Shiraki T."/>
            <person name="Suzuki S."/>
            <person name="Tagami M."/>
            <person name="Waki K."/>
            <person name="Watahiki A."/>
            <person name="Okamura-Oho Y."/>
            <person name="Suzuki H."/>
            <person name="Kawai J."/>
            <person name="Hayashizaki Y."/>
        </authorList>
    </citation>
    <scope>NUCLEOTIDE SEQUENCE [LARGE SCALE MRNA]</scope>
    <source>
        <strain>C57BL/6J</strain>
        <tissue>Cerebellum</tissue>
        <tissue>Hippocampus</tissue>
        <tissue>Kidney</tissue>
    </source>
</reference>
<reference key="3">
    <citation type="journal article" date="2004" name="Genome Res.">
        <title>The status, quality, and expansion of the NIH full-length cDNA project: the Mammalian Gene Collection (MGC).</title>
        <authorList>
            <consortium name="The MGC Project Team"/>
        </authorList>
    </citation>
    <scope>NUCLEOTIDE SEQUENCE [LARGE SCALE MRNA]</scope>
    <source>
        <strain>FVB/N</strain>
        <tissue>Liver</tissue>
    </source>
</reference>
<reference key="4">
    <citation type="journal article" date="2005" name="Science">
        <title>Tubulin polyglutamylase enzymes are members of the TTL domain protein family.</title>
        <authorList>
            <person name="Janke C."/>
            <person name="Rogowski K."/>
            <person name="Wloga D."/>
            <person name="Regnard C."/>
            <person name="Kajava A.V."/>
            <person name="Strub J.-M."/>
            <person name="Temurak N."/>
            <person name="van Dijk J."/>
            <person name="Boucher D."/>
            <person name="van Dorsselaer A."/>
            <person name="Suryavanshi S."/>
            <person name="Gaertig J."/>
            <person name="Edde B."/>
        </authorList>
    </citation>
    <scope>IDENTIFICATION BY MASS SPECTROMETRY AS PART OF THE TUBULIN POLYGLUTAMYLASE COMPLEX</scope>
</reference>
<gene>
    <name type="primary">Nicn1</name>
</gene>
<comment type="subunit">
    <text>Part of the neuronal tubulin polyglutamylase complex which contains TPGS1, TPGS2, TTLL1, LRRC49 and NICN1.</text>
</comment>
<comment type="subcellular location">
    <subcellularLocation>
        <location evidence="1">Nucleus</location>
    </subcellularLocation>
</comment>
<comment type="tissue specificity">
    <text evidence="2">High expression level is found in brain, testis, liver and kidney. Weak expression in spleen, leukocytes, small intestin and colon.</text>
</comment>
<comment type="developmental stage">
    <text evidence="2">Detected in all tissues of the developing embryos.</text>
</comment>
<protein>
    <recommendedName>
        <fullName>Nicolin-1</fullName>
    </recommendedName>
    <alternativeName>
        <fullName>Tubulin polyglutamylase complex subunit 5</fullName>
        <shortName>PGs5</shortName>
    </alternativeName>
    <alternativeName>
        <fullName>p24</fullName>
    </alternativeName>
</protein>
<dbReference type="EMBL" id="AJ299741">
    <property type="protein sequence ID" value="CAC82517.1"/>
    <property type="molecule type" value="mRNA"/>
</dbReference>
<dbReference type="EMBL" id="AJ437692">
    <property type="protein sequence ID" value="CAD26916.1"/>
    <property type="molecule type" value="Genomic_DNA"/>
</dbReference>
<dbReference type="EMBL" id="AK002789">
    <property type="protein sequence ID" value="BAB22360.1"/>
    <property type="molecule type" value="mRNA"/>
</dbReference>
<dbReference type="EMBL" id="AK013602">
    <property type="protein sequence ID" value="BAB28922.1"/>
    <property type="molecule type" value="mRNA"/>
</dbReference>
<dbReference type="EMBL" id="AK075732">
    <property type="protein sequence ID" value="BAC35916.1"/>
    <property type="molecule type" value="mRNA"/>
</dbReference>
<dbReference type="EMBL" id="BC024050">
    <property type="protein sequence ID" value="AAH24050.1"/>
    <property type="molecule type" value="mRNA"/>
</dbReference>
<dbReference type="CCDS" id="CCDS40767.1"/>
<dbReference type="RefSeq" id="NP_079725.1">
    <property type="nucleotide sequence ID" value="NM_025449.4"/>
</dbReference>
<dbReference type="CORUM" id="Q9CQM0"/>
<dbReference type="FunCoup" id="Q9CQM0">
    <property type="interactions" value="2952"/>
</dbReference>
<dbReference type="STRING" id="10090.ENSMUSP00000035227"/>
<dbReference type="iPTMnet" id="Q9CQM0"/>
<dbReference type="PhosphoSitePlus" id="Q9CQM0"/>
<dbReference type="SwissPalm" id="Q9CQM0"/>
<dbReference type="PaxDb" id="10090-ENSMUSP00000035227"/>
<dbReference type="ProteomicsDB" id="252963"/>
<dbReference type="Antibodypedia" id="30534">
    <property type="antibodies" value="66 antibodies from 16 providers"/>
</dbReference>
<dbReference type="DNASU" id="66257"/>
<dbReference type="Ensembl" id="ENSMUST00000035227.8">
    <property type="protein sequence ID" value="ENSMUSP00000035227.7"/>
    <property type="gene ID" value="ENSMUSG00000032606.8"/>
</dbReference>
<dbReference type="GeneID" id="66257"/>
<dbReference type="KEGG" id="mmu:66257"/>
<dbReference type="UCSC" id="uc009rpb.1">
    <property type="organism name" value="mouse"/>
</dbReference>
<dbReference type="AGR" id="MGI:1913507"/>
<dbReference type="CTD" id="84276"/>
<dbReference type="MGI" id="MGI:1913507">
    <property type="gene designation" value="Nicn1"/>
</dbReference>
<dbReference type="VEuPathDB" id="HostDB:ENSMUSG00000032606"/>
<dbReference type="eggNOG" id="ENOG502QQWA">
    <property type="taxonomic scope" value="Eukaryota"/>
</dbReference>
<dbReference type="GeneTree" id="ENSGT00390000001505"/>
<dbReference type="HOGENOM" id="CLU_114995_0_0_1"/>
<dbReference type="InParanoid" id="Q9CQM0"/>
<dbReference type="OMA" id="MWVLTEV"/>
<dbReference type="OrthoDB" id="73161at2759"/>
<dbReference type="PhylomeDB" id="Q9CQM0"/>
<dbReference type="TreeFam" id="TF329753"/>
<dbReference type="BioGRID-ORCS" id="66257">
    <property type="hits" value="2 hits in 76 CRISPR screens"/>
</dbReference>
<dbReference type="ChiTaRS" id="Nicn1">
    <property type="organism name" value="mouse"/>
</dbReference>
<dbReference type="PRO" id="PR:Q9CQM0"/>
<dbReference type="Proteomes" id="UP000000589">
    <property type="component" value="Chromosome 9"/>
</dbReference>
<dbReference type="RNAct" id="Q9CQM0">
    <property type="molecule type" value="protein"/>
</dbReference>
<dbReference type="Bgee" id="ENSMUSG00000032606">
    <property type="expression patterns" value="Expressed in ventromedial nucleus of hypothalamus and 264 other cell types or tissues"/>
</dbReference>
<dbReference type="GO" id="GO:0005829">
    <property type="term" value="C:cytosol"/>
    <property type="evidence" value="ECO:0000304"/>
    <property type="project" value="Reactome"/>
</dbReference>
<dbReference type="GO" id="GO:0005874">
    <property type="term" value="C:microtubule"/>
    <property type="evidence" value="ECO:0007669"/>
    <property type="project" value="UniProtKB-KW"/>
</dbReference>
<dbReference type="GO" id="GO:0005654">
    <property type="term" value="C:nucleoplasm"/>
    <property type="evidence" value="ECO:0007669"/>
    <property type="project" value="Ensembl"/>
</dbReference>
<dbReference type="InterPro" id="IPR040235">
    <property type="entry name" value="Nicolin-1"/>
</dbReference>
<dbReference type="PANTHER" id="PTHR31239">
    <property type="entry name" value="NICOLIN 1"/>
    <property type="match status" value="1"/>
</dbReference>
<dbReference type="PANTHER" id="PTHR31239:SF2">
    <property type="entry name" value="NICOLIN-1"/>
    <property type="match status" value="1"/>
</dbReference>
<keyword id="KW-0493">Microtubule</keyword>
<keyword id="KW-0539">Nucleus</keyword>
<keyword id="KW-1185">Reference proteome</keyword>
<name>NICN1_MOUSE</name>
<proteinExistence type="evidence at protein level"/>
<organism>
    <name type="scientific">Mus musculus</name>
    <name type="common">Mouse</name>
    <dbReference type="NCBI Taxonomy" id="10090"/>
    <lineage>
        <taxon>Eukaryota</taxon>
        <taxon>Metazoa</taxon>
        <taxon>Chordata</taxon>
        <taxon>Craniata</taxon>
        <taxon>Vertebrata</taxon>
        <taxon>Euteleostomi</taxon>
        <taxon>Mammalia</taxon>
        <taxon>Eutheria</taxon>
        <taxon>Euarchontoglires</taxon>
        <taxon>Glires</taxon>
        <taxon>Rodentia</taxon>
        <taxon>Myomorpha</taxon>
        <taxon>Muroidea</taxon>
        <taxon>Muridae</taxon>
        <taxon>Murinae</taxon>
        <taxon>Mus</taxon>
        <taxon>Mus</taxon>
    </lineage>
</organism>